<dbReference type="EMBL" id="U47660">
    <property type="protein sequence ID" value="AAB03267.1"/>
    <property type="molecule type" value="Genomic_DNA"/>
</dbReference>
<dbReference type="SMR" id="Q40106"/>
<dbReference type="OrthoDB" id="1662883at2759"/>
<dbReference type="GO" id="GO:0005737">
    <property type="term" value="C:cytoplasm"/>
    <property type="evidence" value="ECO:0007669"/>
    <property type="project" value="UniProtKB-KW"/>
</dbReference>
<dbReference type="GO" id="GO:0005874">
    <property type="term" value="C:microtubule"/>
    <property type="evidence" value="ECO:0007669"/>
    <property type="project" value="UniProtKB-KW"/>
</dbReference>
<dbReference type="GO" id="GO:0005525">
    <property type="term" value="F:GTP binding"/>
    <property type="evidence" value="ECO:0007669"/>
    <property type="project" value="UniProtKB-KW"/>
</dbReference>
<dbReference type="GO" id="GO:0003924">
    <property type="term" value="F:GTPase activity"/>
    <property type="evidence" value="ECO:0007669"/>
    <property type="project" value="InterPro"/>
</dbReference>
<dbReference type="GO" id="GO:0046872">
    <property type="term" value="F:metal ion binding"/>
    <property type="evidence" value="ECO:0007669"/>
    <property type="project" value="UniProtKB-KW"/>
</dbReference>
<dbReference type="GO" id="GO:0005200">
    <property type="term" value="F:structural constituent of cytoskeleton"/>
    <property type="evidence" value="ECO:0007669"/>
    <property type="project" value="InterPro"/>
</dbReference>
<dbReference type="GO" id="GO:0007017">
    <property type="term" value="P:microtubule-based process"/>
    <property type="evidence" value="ECO:0007669"/>
    <property type="project" value="InterPro"/>
</dbReference>
<dbReference type="CDD" id="cd02187">
    <property type="entry name" value="beta_tubulin"/>
    <property type="match status" value="1"/>
</dbReference>
<dbReference type="FunFam" id="1.10.287.600:FF:000002">
    <property type="entry name" value="Tubulin beta chain"/>
    <property type="match status" value="1"/>
</dbReference>
<dbReference type="FunFam" id="3.30.1330.20:FF:000002">
    <property type="entry name" value="Tubulin beta chain"/>
    <property type="match status" value="1"/>
</dbReference>
<dbReference type="FunFam" id="3.40.50.1440:FF:000005">
    <property type="entry name" value="Tubulin beta chain"/>
    <property type="match status" value="1"/>
</dbReference>
<dbReference type="Gene3D" id="1.10.287.600">
    <property type="entry name" value="Helix hairpin bin"/>
    <property type="match status" value="1"/>
</dbReference>
<dbReference type="Gene3D" id="3.30.1330.20">
    <property type="entry name" value="Tubulin/FtsZ, C-terminal domain"/>
    <property type="match status" value="1"/>
</dbReference>
<dbReference type="Gene3D" id="3.40.50.1440">
    <property type="entry name" value="Tubulin/FtsZ, GTPase domain"/>
    <property type="match status" value="1"/>
</dbReference>
<dbReference type="InterPro" id="IPR013838">
    <property type="entry name" value="Beta-tubulin_BS"/>
</dbReference>
<dbReference type="InterPro" id="IPR002453">
    <property type="entry name" value="Beta_tubulin"/>
</dbReference>
<dbReference type="InterPro" id="IPR008280">
    <property type="entry name" value="Tub_FtsZ_C"/>
</dbReference>
<dbReference type="InterPro" id="IPR000217">
    <property type="entry name" value="Tubulin"/>
</dbReference>
<dbReference type="InterPro" id="IPR037103">
    <property type="entry name" value="Tubulin/FtsZ-like_C"/>
</dbReference>
<dbReference type="InterPro" id="IPR018316">
    <property type="entry name" value="Tubulin/FtsZ_2-layer-sand-dom"/>
</dbReference>
<dbReference type="InterPro" id="IPR036525">
    <property type="entry name" value="Tubulin/FtsZ_GTPase_sf"/>
</dbReference>
<dbReference type="InterPro" id="IPR023123">
    <property type="entry name" value="Tubulin_C"/>
</dbReference>
<dbReference type="InterPro" id="IPR017975">
    <property type="entry name" value="Tubulin_CS"/>
</dbReference>
<dbReference type="InterPro" id="IPR003008">
    <property type="entry name" value="Tubulin_FtsZ_GTPase"/>
</dbReference>
<dbReference type="PANTHER" id="PTHR11588">
    <property type="entry name" value="TUBULIN"/>
    <property type="match status" value="1"/>
</dbReference>
<dbReference type="Pfam" id="PF00091">
    <property type="entry name" value="Tubulin"/>
    <property type="match status" value="1"/>
</dbReference>
<dbReference type="Pfam" id="PF03953">
    <property type="entry name" value="Tubulin_C"/>
    <property type="match status" value="1"/>
</dbReference>
<dbReference type="PRINTS" id="PR01163">
    <property type="entry name" value="BETATUBULIN"/>
</dbReference>
<dbReference type="PRINTS" id="PR01161">
    <property type="entry name" value="TUBULIN"/>
</dbReference>
<dbReference type="SMART" id="SM00864">
    <property type="entry name" value="Tubulin"/>
    <property type="match status" value="1"/>
</dbReference>
<dbReference type="SMART" id="SM00865">
    <property type="entry name" value="Tubulin_C"/>
    <property type="match status" value="1"/>
</dbReference>
<dbReference type="SUPFAM" id="SSF55307">
    <property type="entry name" value="Tubulin C-terminal domain-like"/>
    <property type="match status" value="1"/>
</dbReference>
<dbReference type="SUPFAM" id="SSF52490">
    <property type="entry name" value="Tubulin nucleotide-binding domain-like"/>
    <property type="match status" value="1"/>
</dbReference>
<dbReference type="PROSITE" id="PS00227">
    <property type="entry name" value="TUBULIN"/>
    <property type="match status" value="1"/>
</dbReference>
<dbReference type="PROSITE" id="PS00228">
    <property type="entry name" value="TUBULIN_B_AUTOREG"/>
    <property type="match status" value="1"/>
</dbReference>
<keyword id="KW-0963">Cytoplasm</keyword>
<keyword id="KW-0206">Cytoskeleton</keyword>
<keyword id="KW-0342">GTP-binding</keyword>
<keyword id="KW-0460">Magnesium</keyword>
<keyword id="KW-0479">Metal-binding</keyword>
<keyword id="KW-0493">Microtubule</keyword>
<keyword id="KW-0547">Nucleotide-binding</keyword>
<organism>
    <name type="scientific">Lupinus albus</name>
    <name type="common">White lupine</name>
    <name type="synonym">Lupinus termis</name>
    <dbReference type="NCBI Taxonomy" id="3870"/>
    <lineage>
        <taxon>Eukaryota</taxon>
        <taxon>Viridiplantae</taxon>
        <taxon>Streptophyta</taxon>
        <taxon>Embryophyta</taxon>
        <taxon>Tracheophyta</taxon>
        <taxon>Spermatophyta</taxon>
        <taxon>Magnoliopsida</taxon>
        <taxon>eudicotyledons</taxon>
        <taxon>Gunneridae</taxon>
        <taxon>Pentapetalae</taxon>
        <taxon>rosids</taxon>
        <taxon>fabids</taxon>
        <taxon>Fabales</taxon>
        <taxon>Fabaceae</taxon>
        <taxon>Papilionoideae</taxon>
        <taxon>50 kb inversion clade</taxon>
        <taxon>genistoids sensu lato</taxon>
        <taxon>core genistoids</taxon>
        <taxon>Genisteae</taxon>
        <taxon>Lupinus</taxon>
    </lineage>
</organism>
<proteinExistence type="inferred from homology"/>
<comment type="function">
    <text>Tubulin is the major constituent of microtubules, a cylinder consisting of laterally associated linear protofilaments composed of alpha- and beta-tubulin heterodimers. Microtubules grow by the addition of GTP-tubulin dimers to the microtubule end, where a stabilizing cap forms. Below the cap, tubulin dimers are in GDP-bound state, owing to GTPase activity of alpha-tubulin.</text>
</comment>
<comment type="cofactor">
    <cofactor evidence="1">
        <name>Mg(2+)</name>
        <dbReference type="ChEBI" id="CHEBI:18420"/>
    </cofactor>
</comment>
<comment type="subunit">
    <text>Dimer of alpha and beta chains. A typical microtubule is a hollow water-filled tube with an outer diameter of 25 nm and an inner diameter of 15 nM. Alpha-beta heterodimers associate head-to-tail to form protofilaments running lengthwise along the microtubule wall with the beta-tubulin subunit facing the microtubule plus end conferring a structural polarity. Microtubules usually have 13 protofilaments but different protofilament numbers can be found in some organisms and specialized cells.</text>
</comment>
<comment type="subcellular location">
    <subcellularLocation>
        <location>Cytoplasm</location>
        <location>Cytoskeleton</location>
    </subcellularLocation>
</comment>
<comment type="similarity">
    <text evidence="4">Belongs to the tubulin family.</text>
</comment>
<protein>
    <recommendedName>
        <fullName>Tubulin beta-2 chain</fullName>
    </recommendedName>
    <alternativeName>
        <fullName>Beta-2-tubulin</fullName>
    </alternativeName>
</protein>
<reference key="1">
    <citation type="submission" date="1996-01" db="EMBL/GenBank/DDBJ databases">
        <authorList>
            <person name="Vassilevskaia T."/>
            <person name="Bekman E."/>
            <person name="Rodrigues-Pousada C."/>
        </authorList>
    </citation>
    <scope>NUCLEOTIDE SEQUENCE [GENOMIC DNA]</scope>
    <source>
        <strain>cv. Ultra</strain>
    </source>
</reference>
<sequence>MREILHIQGGQCGNQIGAKFWEVVCAEHGIDSTGRYEGDNVLQLERVNVYYNEASCGRFVPRAVLMDLEPGTMDSLRSGTYGQIFRPDNFVFGQSGAGNNWAKGHYTEGAELIDSVLDVVRKEAENCDCLQGFQVCHSLGGGTGSGMGTLLISKIREEYPDRMMLTFSVFPSPKVSDTVVEPYNATLSVHQLVENADECMVLDNEALYDICFRTLKLTTPSFGDLNHLISATMSGVTCCLRFPGQLNSDLRKLAVNLIPFPRLHFFMVGFAPLTSRGSQQYRALTVPELTQQMWDAKNMMCAADPRHGRYLTASAMFRGKMSTKEVDEQMINVQNKNSSYFVEWIPNNVKSTVCDIPPTGLKMASTFIGNSTSIQEMFRRVSEQFTAMFRRKAFLHWYTGEGMDEMEFTEAESNMNDLVSEYQQYQDATADEDGYEYEDEEEVGEEDA</sequence>
<evidence type="ECO:0000250" key="1">
    <source>
        <dbReference type="UniProtKB" id="P68363"/>
    </source>
</evidence>
<evidence type="ECO:0000250" key="2">
    <source>
        <dbReference type="UniProtKB" id="Q13509"/>
    </source>
</evidence>
<evidence type="ECO:0000256" key="3">
    <source>
        <dbReference type="SAM" id="MobiDB-lite"/>
    </source>
</evidence>
<evidence type="ECO:0000305" key="4"/>
<accession>Q40106</accession>
<gene>
    <name type="primary">TUBB2</name>
</gene>
<name>TBB2_LUPAL</name>
<feature type="chain" id="PRO_0000048354" description="Tubulin beta-2 chain">
    <location>
        <begin position="1"/>
        <end position="448"/>
    </location>
</feature>
<feature type="region of interest" description="Disordered" evidence="3">
    <location>
        <begin position="429"/>
        <end position="448"/>
    </location>
</feature>
<feature type="binding site" evidence="2">
    <location>
        <position position="11"/>
    </location>
    <ligand>
        <name>GTP</name>
        <dbReference type="ChEBI" id="CHEBI:37565"/>
    </ligand>
</feature>
<feature type="binding site" evidence="1">
    <location>
        <position position="69"/>
    </location>
    <ligand>
        <name>GTP</name>
        <dbReference type="ChEBI" id="CHEBI:37565"/>
    </ligand>
</feature>
<feature type="binding site" evidence="1">
    <location>
        <position position="69"/>
    </location>
    <ligand>
        <name>Mg(2+)</name>
        <dbReference type="ChEBI" id="CHEBI:18420"/>
    </ligand>
</feature>
<feature type="binding site" evidence="2">
    <location>
        <position position="138"/>
    </location>
    <ligand>
        <name>GTP</name>
        <dbReference type="ChEBI" id="CHEBI:37565"/>
    </ligand>
</feature>
<feature type="binding site" evidence="2">
    <location>
        <position position="142"/>
    </location>
    <ligand>
        <name>GTP</name>
        <dbReference type="ChEBI" id="CHEBI:37565"/>
    </ligand>
</feature>
<feature type="binding site" evidence="2">
    <location>
        <position position="143"/>
    </location>
    <ligand>
        <name>GTP</name>
        <dbReference type="ChEBI" id="CHEBI:37565"/>
    </ligand>
</feature>
<feature type="binding site" evidence="2">
    <location>
        <position position="144"/>
    </location>
    <ligand>
        <name>GTP</name>
        <dbReference type="ChEBI" id="CHEBI:37565"/>
    </ligand>
</feature>
<feature type="binding site" evidence="2">
    <location>
        <position position="204"/>
    </location>
    <ligand>
        <name>GTP</name>
        <dbReference type="ChEBI" id="CHEBI:37565"/>
    </ligand>
</feature>
<feature type="binding site" evidence="2">
    <location>
        <position position="226"/>
    </location>
    <ligand>
        <name>GTP</name>
        <dbReference type="ChEBI" id="CHEBI:37565"/>
    </ligand>
</feature>